<keyword id="KW-0378">Hydrolase</keyword>
<keyword id="KW-0408">Iron</keyword>
<keyword id="KW-0479">Metal-binding</keyword>
<keyword id="KW-0648">Protein biosynthesis</keyword>
<gene>
    <name evidence="1" type="primary">def</name>
    <name type="ordered locus">Athe_1039</name>
</gene>
<sequence length="166" mass="18794">MALRKIRTYEDEILRKKSKVVEKFDQRLCQLLDDMKDTMYEANGIGLAAPQVGVLKRAVVIDIGEGAIELVNPEIEQVEGSAVDVEGCLSVPNVWGEVERPQKVVVKAQDRFGNEFRLEAEGLLARAVCHEIDHLDGILFVDKVIRFVSEEEIEQRRSRGDKMDLE</sequence>
<comment type="function">
    <text evidence="1">Removes the formyl group from the N-terminal Met of newly synthesized proteins. Requires at least a dipeptide for an efficient rate of reaction. N-terminal L-methionine is a prerequisite for activity but the enzyme has broad specificity at other positions.</text>
</comment>
<comment type="catalytic activity">
    <reaction evidence="1">
        <text>N-terminal N-formyl-L-methionyl-[peptide] + H2O = N-terminal L-methionyl-[peptide] + formate</text>
        <dbReference type="Rhea" id="RHEA:24420"/>
        <dbReference type="Rhea" id="RHEA-COMP:10639"/>
        <dbReference type="Rhea" id="RHEA-COMP:10640"/>
        <dbReference type="ChEBI" id="CHEBI:15377"/>
        <dbReference type="ChEBI" id="CHEBI:15740"/>
        <dbReference type="ChEBI" id="CHEBI:49298"/>
        <dbReference type="ChEBI" id="CHEBI:64731"/>
        <dbReference type="EC" id="3.5.1.88"/>
    </reaction>
</comment>
<comment type="cofactor">
    <cofactor evidence="1">
        <name>Fe(2+)</name>
        <dbReference type="ChEBI" id="CHEBI:29033"/>
    </cofactor>
    <text evidence="1">Binds 1 Fe(2+) ion.</text>
</comment>
<comment type="similarity">
    <text evidence="1">Belongs to the polypeptide deformylase family.</text>
</comment>
<feature type="chain" id="PRO_1000200715" description="Peptide deformylase">
    <location>
        <begin position="1"/>
        <end position="166"/>
    </location>
</feature>
<feature type="active site" evidence="1">
    <location>
        <position position="131"/>
    </location>
</feature>
<feature type="binding site" evidence="1">
    <location>
        <position position="88"/>
    </location>
    <ligand>
        <name>Fe cation</name>
        <dbReference type="ChEBI" id="CHEBI:24875"/>
    </ligand>
</feature>
<feature type="binding site" evidence="1">
    <location>
        <position position="130"/>
    </location>
    <ligand>
        <name>Fe cation</name>
        <dbReference type="ChEBI" id="CHEBI:24875"/>
    </ligand>
</feature>
<feature type="binding site" evidence="1">
    <location>
        <position position="134"/>
    </location>
    <ligand>
        <name>Fe cation</name>
        <dbReference type="ChEBI" id="CHEBI:24875"/>
    </ligand>
</feature>
<protein>
    <recommendedName>
        <fullName evidence="1">Peptide deformylase</fullName>
        <shortName evidence="1">PDF</shortName>
        <ecNumber evidence="1">3.5.1.88</ecNumber>
    </recommendedName>
    <alternativeName>
        <fullName evidence="1">Polypeptide deformylase</fullName>
    </alternativeName>
</protein>
<organism>
    <name type="scientific">Caldicellulosiruptor bescii (strain ATCC BAA-1888 / DSM 6725 / KCTC 15123 / Z-1320)</name>
    <name type="common">Anaerocellum thermophilum</name>
    <dbReference type="NCBI Taxonomy" id="521460"/>
    <lineage>
        <taxon>Bacteria</taxon>
        <taxon>Bacillati</taxon>
        <taxon>Bacillota</taxon>
        <taxon>Bacillota incertae sedis</taxon>
        <taxon>Caldicellulosiruptorales</taxon>
        <taxon>Caldicellulosiruptoraceae</taxon>
        <taxon>Caldicellulosiruptor</taxon>
    </lineage>
</organism>
<reference key="1">
    <citation type="submission" date="2009-01" db="EMBL/GenBank/DDBJ databases">
        <title>Complete sequence of chromosome of Caldicellulosiruptor becscii DSM 6725.</title>
        <authorList>
            <person name="Lucas S."/>
            <person name="Copeland A."/>
            <person name="Lapidus A."/>
            <person name="Glavina del Rio T."/>
            <person name="Tice H."/>
            <person name="Bruce D."/>
            <person name="Goodwin L."/>
            <person name="Pitluck S."/>
            <person name="Sims D."/>
            <person name="Meincke L."/>
            <person name="Brettin T."/>
            <person name="Detter J.C."/>
            <person name="Han C."/>
            <person name="Larimer F."/>
            <person name="Land M."/>
            <person name="Hauser L."/>
            <person name="Kyrpides N."/>
            <person name="Ovchinnikova G."/>
            <person name="Kataeva I."/>
            <person name="Adams M.W.W."/>
        </authorList>
    </citation>
    <scope>NUCLEOTIDE SEQUENCE [LARGE SCALE GENOMIC DNA]</scope>
    <source>
        <strain>ATCC BAA-1888 / DSM 6725 / KCTC 15123 / Z-1320</strain>
    </source>
</reference>
<proteinExistence type="inferred from homology"/>
<dbReference type="EC" id="3.5.1.88" evidence="1"/>
<dbReference type="EMBL" id="CP001393">
    <property type="protein sequence ID" value="ACM60140.1"/>
    <property type="molecule type" value="Genomic_DNA"/>
</dbReference>
<dbReference type="RefSeq" id="WP_015907552.1">
    <property type="nucleotide sequence ID" value="NC_012034.1"/>
</dbReference>
<dbReference type="SMR" id="B9MR36"/>
<dbReference type="STRING" id="521460.Athe_1039"/>
<dbReference type="GeneID" id="31772390"/>
<dbReference type="KEGG" id="ate:Athe_1039"/>
<dbReference type="eggNOG" id="COG0242">
    <property type="taxonomic scope" value="Bacteria"/>
</dbReference>
<dbReference type="HOGENOM" id="CLU_061901_4_2_9"/>
<dbReference type="Proteomes" id="UP000007723">
    <property type="component" value="Chromosome"/>
</dbReference>
<dbReference type="GO" id="GO:0046872">
    <property type="term" value="F:metal ion binding"/>
    <property type="evidence" value="ECO:0007669"/>
    <property type="project" value="UniProtKB-KW"/>
</dbReference>
<dbReference type="GO" id="GO:0042586">
    <property type="term" value="F:peptide deformylase activity"/>
    <property type="evidence" value="ECO:0007669"/>
    <property type="project" value="UniProtKB-UniRule"/>
</dbReference>
<dbReference type="GO" id="GO:0043686">
    <property type="term" value="P:co-translational protein modification"/>
    <property type="evidence" value="ECO:0007669"/>
    <property type="project" value="TreeGrafter"/>
</dbReference>
<dbReference type="GO" id="GO:0006412">
    <property type="term" value="P:translation"/>
    <property type="evidence" value="ECO:0007669"/>
    <property type="project" value="UniProtKB-UniRule"/>
</dbReference>
<dbReference type="CDD" id="cd00487">
    <property type="entry name" value="Pep_deformylase"/>
    <property type="match status" value="1"/>
</dbReference>
<dbReference type="FunFam" id="3.90.45.10:FF:000005">
    <property type="entry name" value="Peptide deformylase"/>
    <property type="match status" value="1"/>
</dbReference>
<dbReference type="Gene3D" id="3.90.45.10">
    <property type="entry name" value="Peptide deformylase"/>
    <property type="match status" value="1"/>
</dbReference>
<dbReference type="HAMAP" id="MF_00163">
    <property type="entry name" value="Pep_deformylase"/>
    <property type="match status" value="1"/>
</dbReference>
<dbReference type="InterPro" id="IPR023635">
    <property type="entry name" value="Peptide_deformylase"/>
</dbReference>
<dbReference type="InterPro" id="IPR036821">
    <property type="entry name" value="Peptide_deformylase_sf"/>
</dbReference>
<dbReference type="NCBIfam" id="TIGR00079">
    <property type="entry name" value="pept_deformyl"/>
    <property type="match status" value="1"/>
</dbReference>
<dbReference type="NCBIfam" id="NF001159">
    <property type="entry name" value="PRK00150.1-3"/>
    <property type="match status" value="1"/>
</dbReference>
<dbReference type="PANTHER" id="PTHR10458">
    <property type="entry name" value="PEPTIDE DEFORMYLASE"/>
    <property type="match status" value="1"/>
</dbReference>
<dbReference type="PANTHER" id="PTHR10458:SF22">
    <property type="entry name" value="PEPTIDE DEFORMYLASE"/>
    <property type="match status" value="1"/>
</dbReference>
<dbReference type="Pfam" id="PF01327">
    <property type="entry name" value="Pep_deformylase"/>
    <property type="match status" value="1"/>
</dbReference>
<dbReference type="PIRSF" id="PIRSF004749">
    <property type="entry name" value="Pep_def"/>
    <property type="match status" value="1"/>
</dbReference>
<dbReference type="PRINTS" id="PR01576">
    <property type="entry name" value="PDEFORMYLASE"/>
</dbReference>
<dbReference type="SUPFAM" id="SSF56420">
    <property type="entry name" value="Peptide deformylase"/>
    <property type="match status" value="1"/>
</dbReference>
<name>DEF_CALBD</name>
<evidence type="ECO:0000255" key="1">
    <source>
        <dbReference type="HAMAP-Rule" id="MF_00163"/>
    </source>
</evidence>
<accession>B9MR36</accession>